<evidence type="ECO:0000250" key="1"/>
<evidence type="ECO:0000255" key="2">
    <source>
        <dbReference type="HAMAP-Rule" id="MF_00403"/>
    </source>
</evidence>
<evidence type="ECO:0000305" key="3"/>
<gene>
    <name evidence="2" type="primary">rpsL</name>
    <name type="ordered locus">A1C_00965</name>
</gene>
<protein>
    <recommendedName>
        <fullName evidence="2">Small ribosomal subunit protein uS12</fullName>
    </recommendedName>
    <alternativeName>
        <fullName evidence="3">30S ribosomal protein S12</fullName>
    </alternativeName>
</protein>
<comment type="function">
    <text evidence="2">With S4 and S5 plays an important role in translational accuracy.</text>
</comment>
<comment type="function">
    <text evidence="2">Interacts with and stabilizes bases of the 16S rRNA that are involved in tRNA selection in the A site and with the mRNA backbone. Located at the interface of the 30S and 50S subunits, it traverses the body of the 30S subunit contacting proteins on the other side and probably holding the rRNA structure together. The combined cluster of proteins S8, S12 and S17 appears to hold together the shoulder and platform of the 30S subunit.</text>
</comment>
<comment type="subunit">
    <text evidence="2">Part of the 30S ribosomal subunit. Contacts proteins S8 and S17. May interact with IF1 in the 30S initiation complex.</text>
</comment>
<comment type="similarity">
    <text evidence="2">Belongs to the universal ribosomal protein uS12 family.</text>
</comment>
<keyword id="KW-0488">Methylation</keyword>
<keyword id="KW-0687">Ribonucleoprotein</keyword>
<keyword id="KW-0689">Ribosomal protein</keyword>
<keyword id="KW-0694">RNA-binding</keyword>
<keyword id="KW-0699">rRNA-binding</keyword>
<keyword id="KW-0820">tRNA-binding</keyword>
<dbReference type="EMBL" id="CP000847">
    <property type="protein sequence ID" value="ABV74523.1"/>
    <property type="molecule type" value="Genomic_DNA"/>
</dbReference>
<dbReference type="RefSeq" id="WP_012013393.1">
    <property type="nucleotide sequence ID" value="NC_009881.1"/>
</dbReference>
<dbReference type="SMR" id="A8GM98"/>
<dbReference type="STRING" id="293614.A1C_00965"/>
<dbReference type="KEGG" id="rak:A1C_00965"/>
<dbReference type="eggNOG" id="COG0048">
    <property type="taxonomic scope" value="Bacteria"/>
</dbReference>
<dbReference type="HOGENOM" id="CLU_104295_1_3_5"/>
<dbReference type="Proteomes" id="UP000006830">
    <property type="component" value="Chromosome"/>
</dbReference>
<dbReference type="GO" id="GO:0015935">
    <property type="term" value="C:small ribosomal subunit"/>
    <property type="evidence" value="ECO:0007669"/>
    <property type="project" value="InterPro"/>
</dbReference>
<dbReference type="GO" id="GO:0019843">
    <property type="term" value="F:rRNA binding"/>
    <property type="evidence" value="ECO:0007669"/>
    <property type="project" value="UniProtKB-UniRule"/>
</dbReference>
<dbReference type="GO" id="GO:0003735">
    <property type="term" value="F:structural constituent of ribosome"/>
    <property type="evidence" value="ECO:0007669"/>
    <property type="project" value="InterPro"/>
</dbReference>
<dbReference type="GO" id="GO:0000049">
    <property type="term" value="F:tRNA binding"/>
    <property type="evidence" value="ECO:0007669"/>
    <property type="project" value="UniProtKB-UniRule"/>
</dbReference>
<dbReference type="GO" id="GO:0006412">
    <property type="term" value="P:translation"/>
    <property type="evidence" value="ECO:0007669"/>
    <property type="project" value="UniProtKB-UniRule"/>
</dbReference>
<dbReference type="CDD" id="cd03368">
    <property type="entry name" value="Ribosomal_S12"/>
    <property type="match status" value="1"/>
</dbReference>
<dbReference type="FunFam" id="2.40.50.140:FF:000192">
    <property type="entry name" value="Mitochondrial ribosomal protein S12"/>
    <property type="match status" value="1"/>
</dbReference>
<dbReference type="Gene3D" id="2.40.50.140">
    <property type="entry name" value="Nucleic acid-binding proteins"/>
    <property type="match status" value="1"/>
</dbReference>
<dbReference type="HAMAP" id="MF_00403_B">
    <property type="entry name" value="Ribosomal_uS12_B"/>
    <property type="match status" value="1"/>
</dbReference>
<dbReference type="InterPro" id="IPR012340">
    <property type="entry name" value="NA-bd_OB-fold"/>
</dbReference>
<dbReference type="InterPro" id="IPR006032">
    <property type="entry name" value="Ribosomal_uS12"/>
</dbReference>
<dbReference type="InterPro" id="IPR005679">
    <property type="entry name" value="Ribosomal_uS12_bac"/>
</dbReference>
<dbReference type="NCBIfam" id="TIGR00981">
    <property type="entry name" value="rpsL_bact"/>
    <property type="match status" value="1"/>
</dbReference>
<dbReference type="PANTHER" id="PTHR11652">
    <property type="entry name" value="30S RIBOSOMAL PROTEIN S12 FAMILY MEMBER"/>
    <property type="match status" value="1"/>
</dbReference>
<dbReference type="Pfam" id="PF00164">
    <property type="entry name" value="Ribosom_S12_S23"/>
    <property type="match status" value="1"/>
</dbReference>
<dbReference type="PIRSF" id="PIRSF002133">
    <property type="entry name" value="Ribosomal_S12/S23"/>
    <property type="match status" value="1"/>
</dbReference>
<dbReference type="PRINTS" id="PR01034">
    <property type="entry name" value="RIBOSOMALS12"/>
</dbReference>
<dbReference type="SUPFAM" id="SSF50249">
    <property type="entry name" value="Nucleic acid-binding proteins"/>
    <property type="match status" value="1"/>
</dbReference>
<dbReference type="PROSITE" id="PS00055">
    <property type="entry name" value="RIBOSOMAL_S12"/>
    <property type="match status" value="1"/>
</dbReference>
<proteinExistence type="inferred from homology"/>
<accession>A8GM98</accession>
<feature type="chain" id="PRO_1000049805" description="Small ribosomal subunit protein uS12">
    <location>
        <begin position="1"/>
        <end position="129"/>
    </location>
</feature>
<feature type="modified residue" description="3-methylthioaspartic acid" evidence="1">
    <location>
        <position position="89"/>
    </location>
</feature>
<sequence>MPTYNQLVRFGRKSKTRKSKSPALESNPFKSGVCLVVKTVTPKKPNSALRKIATVRLSNKRTVNAYIPGEKHSVKEHDRVLVRGGQVPDLPGVKYHIVLGAYDISGVKGRKQGRSRYGAPCKQIAVTKK</sequence>
<organism>
    <name type="scientific">Rickettsia akari (strain Hartford)</name>
    <dbReference type="NCBI Taxonomy" id="293614"/>
    <lineage>
        <taxon>Bacteria</taxon>
        <taxon>Pseudomonadati</taxon>
        <taxon>Pseudomonadota</taxon>
        <taxon>Alphaproteobacteria</taxon>
        <taxon>Rickettsiales</taxon>
        <taxon>Rickettsiaceae</taxon>
        <taxon>Rickettsieae</taxon>
        <taxon>Rickettsia</taxon>
        <taxon>spotted fever group</taxon>
    </lineage>
</organism>
<name>RS12_RICAH</name>
<reference key="1">
    <citation type="submission" date="2007-09" db="EMBL/GenBank/DDBJ databases">
        <title>Complete genome sequence of Rickettsia akari.</title>
        <authorList>
            <person name="Madan A."/>
            <person name="Fahey J."/>
            <person name="Helton E."/>
            <person name="Ketteman M."/>
            <person name="Madan A."/>
            <person name="Rodrigues S."/>
            <person name="Sanchez A."/>
            <person name="Whiting M."/>
            <person name="Dasch G."/>
            <person name="Eremeeva M."/>
        </authorList>
    </citation>
    <scope>NUCLEOTIDE SEQUENCE [LARGE SCALE GENOMIC DNA]</scope>
    <source>
        <strain>Hartford</strain>
    </source>
</reference>